<gene>
    <name type="ORF">ORF61c</name>
</gene>
<keyword id="KW-0175">Coiled coil</keyword>
<keyword id="KW-1185">Reference proteome</keyword>
<organism>
    <name type="scientific">Acidianus bottle-shaped virus (isolate Italy/Pozzuoli)</name>
    <name type="common">ABV</name>
    <dbReference type="NCBI Taxonomy" id="654911"/>
    <lineage>
        <taxon>Viruses</taxon>
        <taxon>Viruses incertae sedis</taxon>
        <taxon>Ampullaviridae</taxon>
        <taxon>Bottigliavirus</taxon>
        <taxon>Bottigliavirus ABV</taxon>
    </lineage>
</organism>
<name>Y061C_ABVP</name>
<protein>
    <recommendedName>
        <fullName>Uncharacterized protein ORF61c</fullName>
    </recommendedName>
</protein>
<reference key="1">
    <citation type="journal article" date="2007" name="Virology">
        <title>Genome of the Acidianus bottle-shaped virus and insights into the replication and packaging mechanisms.</title>
        <authorList>
            <person name="Peng X."/>
            <person name="Basta T."/>
            <person name="Haring M."/>
            <person name="Garrett R.A."/>
            <person name="Prangishvili D."/>
        </authorList>
    </citation>
    <scope>NUCLEOTIDE SEQUENCE [GENOMIC DNA]</scope>
</reference>
<proteinExistence type="predicted"/>
<evidence type="ECO:0000255" key="1"/>
<sequence>MRKCISICFYEEENDNEDFEEEVELSREDLNQIINELAPFLIKLLTDLTELTQKKEESENE</sequence>
<accession>A4ZUA2</accession>
<organismHost>
    <name type="scientific">Acidianus convivator</name>
    <dbReference type="NCBI Taxonomy" id="269667"/>
</organismHost>
<dbReference type="EMBL" id="EF432053">
    <property type="protein sequence ID" value="ABP73406.1"/>
    <property type="molecule type" value="Genomic_DNA"/>
</dbReference>
<dbReference type="RefSeq" id="YP_001210320.1">
    <property type="nucleotide sequence ID" value="NC_009452.1"/>
</dbReference>
<dbReference type="SMR" id="A4ZUA2"/>
<dbReference type="GeneID" id="5129831"/>
<dbReference type="KEGG" id="vg:5129831"/>
<dbReference type="Proteomes" id="UP000000513">
    <property type="component" value="Segment"/>
</dbReference>
<feature type="chain" id="PRO_0000384831" description="Uncharacterized protein ORF61c">
    <location>
        <begin position="1"/>
        <end position="61"/>
    </location>
</feature>
<feature type="coiled-coil region" evidence="1">
    <location>
        <begin position="10"/>
        <end position="61"/>
    </location>
</feature>